<gene>
    <name evidence="2" type="primary">purD</name>
    <name type="ordered locus">SPs0027</name>
</gene>
<organism>
    <name type="scientific">Streptococcus pyogenes serotype M3 (strain SSI-1)</name>
    <dbReference type="NCBI Taxonomy" id="193567"/>
    <lineage>
        <taxon>Bacteria</taxon>
        <taxon>Bacillati</taxon>
        <taxon>Bacillota</taxon>
        <taxon>Bacilli</taxon>
        <taxon>Lactobacillales</taxon>
        <taxon>Streptococcaceae</taxon>
        <taxon>Streptococcus</taxon>
    </lineage>
</organism>
<reference key="1">
    <citation type="journal article" date="2003" name="Genome Res.">
        <title>Genome sequence of an M3 strain of Streptococcus pyogenes reveals a large-scale genomic rearrangement in invasive strains and new insights into phage evolution.</title>
        <authorList>
            <person name="Nakagawa I."/>
            <person name="Kurokawa K."/>
            <person name="Yamashita A."/>
            <person name="Nakata M."/>
            <person name="Tomiyasu Y."/>
            <person name="Okahashi N."/>
            <person name="Kawabata S."/>
            <person name="Yamazaki K."/>
            <person name="Shiba T."/>
            <person name="Yasunaga T."/>
            <person name="Hayashi H."/>
            <person name="Hattori M."/>
            <person name="Hamada S."/>
        </authorList>
    </citation>
    <scope>NUCLEOTIDE SEQUENCE [LARGE SCALE GENOMIC DNA]</scope>
    <source>
        <strain>SSI-1</strain>
    </source>
</reference>
<feature type="chain" id="PRO_0000411469" description="Phosphoribosylamine--glycine ligase">
    <location>
        <begin position="1"/>
        <end position="421"/>
    </location>
</feature>
<feature type="domain" description="ATP-grasp" evidence="2">
    <location>
        <begin position="108"/>
        <end position="314"/>
    </location>
</feature>
<feature type="binding site" evidence="2">
    <location>
        <begin position="134"/>
        <end position="195"/>
    </location>
    <ligand>
        <name>ATP</name>
        <dbReference type="ChEBI" id="CHEBI:30616"/>
    </ligand>
</feature>
<feature type="binding site" evidence="2">
    <location>
        <position position="284"/>
    </location>
    <ligand>
        <name>Mg(2+)</name>
        <dbReference type="ChEBI" id="CHEBI:18420"/>
    </ligand>
</feature>
<feature type="binding site" evidence="2">
    <location>
        <position position="286"/>
    </location>
    <ligand>
        <name>Mg(2+)</name>
        <dbReference type="ChEBI" id="CHEBI:18420"/>
    </ligand>
</feature>
<proteinExistence type="inferred from homology"/>
<accession>P0DD59</accession>
<accession>Q8K8Y4</accession>
<comment type="catalytic activity">
    <reaction evidence="2">
        <text>5-phospho-beta-D-ribosylamine + glycine + ATP = N(1)-(5-phospho-beta-D-ribosyl)glycinamide + ADP + phosphate + H(+)</text>
        <dbReference type="Rhea" id="RHEA:17453"/>
        <dbReference type="ChEBI" id="CHEBI:15378"/>
        <dbReference type="ChEBI" id="CHEBI:30616"/>
        <dbReference type="ChEBI" id="CHEBI:43474"/>
        <dbReference type="ChEBI" id="CHEBI:57305"/>
        <dbReference type="ChEBI" id="CHEBI:58681"/>
        <dbReference type="ChEBI" id="CHEBI:143788"/>
        <dbReference type="ChEBI" id="CHEBI:456216"/>
        <dbReference type="EC" id="6.3.4.13"/>
    </reaction>
</comment>
<comment type="cofactor">
    <cofactor evidence="1">
        <name>Mg(2+)</name>
        <dbReference type="ChEBI" id="CHEBI:18420"/>
    </cofactor>
    <cofactor evidence="1">
        <name>Mn(2+)</name>
        <dbReference type="ChEBI" id="CHEBI:29035"/>
    </cofactor>
    <text evidence="1">Binds 1 Mg(2+) or Mn(2+) ion per subunit.</text>
</comment>
<comment type="pathway">
    <text evidence="2">Purine metabolism; IMP biosynthesis via de novo pathway; N(1)-(5-phospho-D-ribosyl)glycinamide from 5-phospho-alpha-D-ribose 1-diphosphate: step 2/2.</text>
</comment>
<comment type="similarity">
    <text evidence="2">Belongs to the GARS family.</text>
</comment>
<comment type="sequence caution" evidence="3">
    <conflict type="erroneous initiation">
        <sequence resource="EMBL-CDS" id="BAC63122"/>
    </conflict>
</comment>
<protein>
    <recommendedName>
        <fullName evidence="2">Phosphoribosylamine--glycine ligase</fullName>
        <ecNumber evidence="2">6.3.4.13</ecNumber>
    </recommendedName>
    <alternativeName>
        <fullName evidence="2">GARS</fullName>
    </alternativeName>
    <alternativeName>
        <fullName evidence="2">Glycinamide ribonucleotide synthetase</fullName>
    </alternativeName>
    <alternativeName>
        <fullName evidence="2">Phosphoribosylglycinamide synthetase</fullName>
    </alternativeName>
</protein>
<dbReference type="EC" id="6.3.4.13" evidence="2"/>
<dbReference type="EMBL" id="BA000034">
    <property type="protein sequence ID" value="BAC63122.1"/>
    <property type="status" value="ALT_INIT"/>
    <property type="molecule type" value="Genomic_DNA"/>
</dbReference>
<dbReference type="RefSeq" id="WP_032461289.1">
    <property type="nucleotide sequence ID" value="NC_004606.1"/>
</dbReference>
<dbReference type="SMR" id="P0DD59"/>
<dbReference type="KEGG" id="sps:SPs0027"/>
<dbReference type="HOGENOM" id="CLU_027420_3_1_9"/>
<dbReference type="UniPathway" id="UPA00074">
    <property type="reaction ID" value="UER00125"/>
</dbReference>
<dbReference type="GO" id="GO:0005524">
    <property type="term" value="F:ATP binding"/>
    <property type="evidence" value="ECO:0007669"/>
    <property type="project" value="UniProtKB-KW"/>
</dbReference>
<dbReference type="GO" id="GO:0046872">
    <property type="term" value="F:metal ion binding"/>
    <property type="evidence" value="ECO:0007669"/>
    <property type="project" value="UniProtKB-KW"/>
</dbReference>
<dbReference type="GO" id="GO:0004637">
    <property type="term" value="F:phosphoribosylamine-glycine ligase activity"/>
    <property type="evidence" value="ECO:0007669"/>
    <property type="project" value="UniProtKB-UniRule"/>
</dbReference>
<dbReference type="GO" id="GO:0006189">
    <property type="term" value="P:'de novo' IMP biosynthetic process"/>
    <property type="evidence" value="ECO:0007669"/>
    <property type="project" value="UniProtKB-UniRule"/>
</dbReference>
<dbReference type="GO" id="GO:0009113">
    <property type="term" value="P:purine nucleobase biosynthetic process"/>
    <property type="evidence" value="ECO:0007669"/>
    <property type="project" value="InterPro"/>
</dbReference>
<dbReference type="FunFam" id="3.30.1490.20:FF:000006">
    <property type="entry name" value="phosphoribosylamine--glycine ligase, chloroplastic-like"/>
    <property type="match status" value="1"/>
</dbReference>
<dbReference type="Gene3D" id="3.40.50.20">
    <property type="match status" value="1"/>
</dbReference>
<dbReference type="Gene3D" id="3.30.1490.20">
    <property type="entry name" value="ATP-grasp fold, A domain"/>
    <property type="match status" value="1"/>
</dbReference>
<dbReference type="Gene3D" id="3.30.470.20">
    <property type="entry name" value="ATP-grasp fold, B domain"/>
    <property type="match status" value="1"/>
</dbReference>
<dbReference type="Gene3D" id="3.90.600.10">
    <property type="entry name" value="Phosphoribosylglycinamide synthetase, C-terminal domain"/>
    <property type="match status" value="1"/>
</dbReference>
<dbReference type="HAMAP" id="MF_00138">
    <property type="entry name" value="GARS"/>
    <property type="match status" value="1"/>
</dbReference>
<dbReference type="InterPro" id="IPR011761">
    <property type="entry name" value="ATP-grasp"/>
</dbReference>
<dbReference type="InterPro" id="IPR013815">
    <property type="entry name" value="ATP_grasp_subdomain_1"/>
</dbReference>
<dbReference type="InterPro" id="IPR016185">
    <property type="entry name" value="PreATP-grasp_dom_sf"/>
</dbReference>
<dbReference type="InterPro" id="IPR020561">
    <property type="entry name" value="PRibGlycinamid_synth_ATP-grasp"/>
</dbReference>
<dbReference type="InterPro" id="IPR000115">
    <property type="entry name" value="PRibGlycinamide_synth"/>
</dbReference>
<dbReference type="InterPro" id="IPR020560">
    <property type="entry name" value="PRibGlycinamide_synth_C-dom"/>
</dbReference>
<dbReference type="InterPro" id="IPR037123">
    <property type="entry name" value="PRibGlycinamide_synth_C_sf"/>
</dbReference>
<dbReference type="InterPro" id="IPR020559">
    <property type="entry name" value="PRibGlycinamide_synth_CS"/>
</dbReference>
<dbReference type="InterPro" id="IPR020562">
    <property type="entry name" value="PRibGlycinamide_synth_N"/>
</dbReference>
<dbReference type="InterPro" id="IPR011054">
    <property type="entry name" value="Rudment_hybrid_motif"/>
</dbReference>
<dbReference type="NCBIfam" id="TIGR00877">
    <property type="entry name" value="purD"/>
    <property type="match status" value="1"/>
</dbReference>
<dbReference type="PANTHER" id="PTHR43472">
    <property type="entry name" value="PHOSPHORIBOSYLAMINE--GLYCINE LIGASE"/>
    <property type="match status" value="1"/>
</dbReference>
<dbReference type="PANTHER" id="PTHR43472:SF1">
    <property type="entry name" value="PHOSPHORIBOSYLAMINE--GLYCINE LIGASE, CHLOROPLASTIC"/>
    <property type="match status" value="1"/>
</dbReference>
<dbReference type="Pfam" id="PF01071">
    <property type="entry name" value="GARS_A"/>
    <property type="match status" value="1"/>
</dbReference>
<dbReference type="Pfam" id="PF02843">
    <property type="entry name" value="GARS_C"/>
    <property type="match status" value="1"/>
</dbReference>
<dbReference type="Pfam" id="PF02844">
    <property type="entry name" value="GARS_N"/>
    <property type="match status" value="1"/>
</dbReference>
<dbReference type="SMART" id="SM01209">
    <property type="entry name" value="GARS_A"/>
    <property type="match status" value="1"/>
</dbReference>
<dbReference type="SMART" id="SM01210">
    <property type="entry name" value="GARS_C"/>
    <property type="match status" value="1"/>
</dbReference>
<dbReference type="SUPFAM" id="SSF56059">
    <property type="entry name" value="Glutathione synthetase ATP-binding domain-like"/>
    <property type="match status" value="1"/>
</dbReference>
<dbReference type="SUPFAM" id="SSF52440">
    <property type="entry name" value="PreATP-grasp domain"/>
    <property type="match status" value="1"/>
</dbReference>
<dbReference type="SUPFAM" id="SSF51246">
    <property type="entry name" value="Rudiment single hybrid motif"/>
    <property type="match status" value="1"/>
</dbReference>
<dbReference type="PROSITE" id="PS50975">
    <property type="entry name" value="ATP_GRASP"/>
    <property type="match status" value="1"/>
</dbReference>
<dbReference type="PROSITE" id="PS00184">
    <property type="entry name" value="GARS"/>
    <property type="match status" value="1"/>
</dbReference>
<keyword id="KW-0067">ATP-binding</keyword>
<keyword id="KW-0436">Ligase</keyword>
<keyword id="KW-0460">Magnesium</keyword>
<keyword id="KW-0464">Manganese</keyword>
<keyword id="KW-0479">Metal-binding</keyword>
<keyword id="KW-0547">Nucleotide-binding</keyword>
<keyword id="KW-0658">Purine biosynthesis</keyword>
<sequence length="421" mass="45519">MKLLVVGSGGREHAIAKKLLASKGVDQVFVAPGNDGMTLDGLDLVNIVVSEHSRLIAFAKENEISWAFIGPDDALAAGIVDDFNTAGLRAFGPTKAAAELEWSKDFAKEIMVKYNVPTAAYGTFSDFEKAKAYIEEQGAPIVVKADGLALGKGVVVAETVEQAVEAAQEMLLDNKFGDSGARVVIEEFLDGEEFSLFAFVNGDKFYIMPTAQDHKRAFDGDKGPNTGGMGAYAPVPHLPQSVVDTAVEMIVRPVLEGMVAEGRPYLGVLYVGLILTADGPKVIEFNSRFGDPETQIILPRLTSDFAQNIDDIMMGIEPYITWQKDGVTLGVVVASEGYPFDYEKGVPLPEKTDGDIITYYAGVKFSENSELLLSNGGRVYMLVTTEDSVKAGQDKIYTQLAQQDPTGLFYRNDIGSKAIRE</sequence>
<name>PUR2_STRPQ</name>
<evidence type="ECO:0000250" key="1"/>
<evidence type="ECO:0000255" key="2">
    <source>
        <dbReference type="HAMAP-Rule" id="MF_00138"/>
    </source>
</evidence>
<evidence type="ECO:0000305" key="3"/>